<dbReference type="EC" id="2.5.1.145" evidence="1"/>
<dbReference type="EMBL" id="CP000107">
    <property type="protein sequence ID" value="AAZ68911.1"/>
    <property type="molecule type" value="Genomic_DNA"/>
</dbReference>
<dbReference type="RefSeq" id="WP_011304987.1">
    <property type="nucleotide sequence ID" value="NC_007354.1"/>
</dbReference>
<dbReference type="SMR" id="Q3YQU4"/>
<dbReference type="FunCoup" id="Q3YQU4">
    <property type="interactions" value="149"/>
</dbReference>
<dbReference type="STRING" id="269484.Ecaj_0880"/>
<dbReference type="KEGG" id="ecn:Ecaj_0880"/>
<dbReference type="eggNOG" id="COG0682">
    <property type="taxonomic scope" value="Bacteria"/>
</dbReference>
<dbReference type="HOGENOM" id="CLU_013386_1_0_5"/>
<dbReference type="InParanoid" id="Q3YQU4"/>
<dbReference type="UniPathway" id="UPA00664"/>
<dbReference type="Proteomes" id="UP000000435">
    <property type="component" value="Chromosome"/>
</dbReference>
<dbReference type="GO" id="GO:0005886">
    <property type="term" value="C:plasma membrane"/>
    <property type="evidence" value="ECO:0007669"/>
    <property type="project" value="UniProtKB-SubCell"/>
</dbReference>
<dbReference type="GO" id="GO:0008961">
    <property type="term" value="F:phosphatidylglycerol-prolipoprotein diacylglyceryl transferase activity"/>
    <property type="evidence" value="ECO:0007669"/>
    <property type="project" value="UniProtKB-UniRule"/>
</dbReference>
<dbReference type="GO" id="GO:0042158">
    <property type="term" value="P:lipoprotein biosynthetic process"/>
    <property type="evidence" value="ECO:0007669"/>
    <property type="project" value="UniProtKB-UniRule"/>
</dbReference>
<dbReference type="HAMAP" id="MF_01147">
    <property type="entry name" value="Lgt"/>
    <property type="match status" value="1"/>
</dbReference>
<dbReference type="InterPro" id="IPR001640">
    <property type="entry name" value="Lgt"/>
</dbReference>
<dbReference type="NCBIfam" id="TIGR00544">
    <property type="entry name" value="lgt"/>
    <property type="match status" value="1"/>
</dbReference>
<dbReference type="PANTHER" id="PTHR30589:SF0">
    <property type="entry name" value="PHOSPHATIDYLGLYCEROL--PROLIPOPROTEIN DIACYLGLYCERYL TRANSFERASE"/>
    <property type="match status" value="1"/>
</dbReference>
<dbReference type="PANTHER" id="PTHR30589">
    <property type="entry name" value="PROLIPOPROTEIN DIACYLGLYCERYL TRANSFERASE"/>
    <property type="match status" value="1"/>
</dbReference>
<dbReference type="Pfam" id="PF01790">
    <property type="entry name" value="LGT"/>
    <property type="match status" value="1"/>
</dbReference>
<dbReference type="PROSITE" id="PS01311">
    <property type="entry name" value="LGT"/>
    <property type="match status" value="1"/>
</dbReference>
<sequence>MIIDQVAFRIGPLQIRWYSLSYIFGMIFAYWYIKKIDKYQVFNKESYESVISWWVISVILGGRIGYILFYNLDFYIHFPIEMLKLWNGGMSFHGALVGVMIGMYIFCRKNKIDVLAAFDLGACAVPVGIFFGRIANFINGELYGKVTDIKIGMIFPASGDLLYRHPSQLYEAFGEGFLLFIITNSLFFFTKIKTSKGMLSSVFCIWYGVIRFFIEFVREPDVQIGYIIFDQITMGQLLSIFMIIMGFYFIKLAKVQDKFSI</sequence>
<protein>
    <recommendedName>
        <fullName evidence="1">Phosphatidylglycerol--prolipoprotein diacylglyceryl transferase</fullName>
        <ecNumber evidence="1">2.5.1.145</ecNumber>
    </recommendedName>
</protein>
<proteinExistence type="inferred from homology"/>
<keyword id="KW-0997">Cell inner membrane</keyword>
<keyword id="KW-1003">Cell membrane</keyword>
<keyword id="KW-0472">Membrane</keyword>
<keyword id="KW-0808">Transferase</keyword>
<keyword id="KW-0812">Transmembrane</keyword>
<keyword id="KW-1133">Transmembrane helix</keyword>
<evidence type="ECO:0000255" key="1">
    <source>
        <dbReference type="HAMAP-Rule" id="MF_01147"/>
    </source>
</evidence>
<feature type="chain" id="PRO_1000053427" description="Phosphatidylglycerol--prolipoprotein diacylglyceryl transferase">
    <location>
        <begin position="1"/>
        <end position="261"/>
    </location>
</feature>
<feature type="transmembrane region" description="Helical" evidence="1">
    <location>
        <begin position="13"/>
        <end position="33"/>
    </location>
</feature>
<feature type="transmembrane region" description="Helical" evidence="1">
    <location>
        <begin position="50"/>
        <end position="70"/>
    </location>
</feature>
<feature type="transmembrane region" description="Helical" evidence="1">
    <location>
        <begin position="86"/>
        <end position="106"/>
    </location>
</feature>
<feature type="transmembrane region" description="Helical" evidence="1">
    <location>
        <begin position="112"/>
        <end position="132"/>
    </location>
</feature>
<feature type="transmembrane region" description="Helical" evidence="1">
    <location>
        <begin position="169"/>
        <end position="189"/>
    </location>
</feature>
<feature type="transmembrane region" description="Helical" evidence="1">
    <location>
        <begin position="197"/>
        <end position="217"/>
    </location>
</feature>
<feature type="transmembrane region" description="Helical" evidence="1">
    <location>
        <begin position="232"/>
        <end position="252"/>
    </location>
</feature>
<feature type="binding site" evidence="1">
    <location>
        <position position="133"/>
    </location>
    <ligand>
        <name>a 1,2-diacyl-sn-glycero-3-phospho-(1'-sn-glycerol)</name>
        <dbReference type="ChEBI" id="CHEBI:64716"/>
    </ligand>
</feature>
<organism>
    <name type="scientific">Ehrlichia canis (strain Jake)</name>
    <dbReference type="NCBI Taxonomy" id="269484"/>
    <lineage>
        <taxon>Bacteria</taxon>
        <taxon>Pseudomonadati</taxon>
        <taxon>Pseudomonadota</taxon>
        <taxon>Alphaproteobacteria</taxon>
        <taxon>Rickettsiales</taxon>
        <taxon>Anaplasmataceae</taxon>
        <taxon>Ehrlichia</taxon>
    </lineage>
</organism>
<gene>
    <name evidence="1" type="primary">lgt</name>
    <name type="ordered locus">Ecaj_0880</name>
</gene>
<accession>Q3YQU4</accession>
<reference key="1">
    <citation type="journal article" date="2006" name="J. Bacteriol.">
        <title>The genome of the obligately intracellular bacterium Ehrlichia canis reveals themes of complex membrane structure and immune evasion strategies.</title>
        <authorList>
            <person name="Mavromatis K."/>
            <person name="Doyle C.K."/>
            <person name="Lykidis A."/>
            <person name="Ivanova N."/>
            <person name="Francino M.P."/>
            <person name="Chain P."/>
            <person name="Shin M."/>
            <person name="Malfatti S."/>
            <person name="Larimer F."/>
            <person name="Copeland A."/>
            <person name="Detter J.C."/>
            <person name="Land M."/>
            <person name="Richardson P.M."/>
            <person name="Yu X.J."/>
            <person name="Walker D.H."/>
            <person name="McBride J.W."/>
            <person name="Kyrpides N.C."/>
        </authorList>
    </citation>
    <scope>NUCLEOTIDE SEQUENCE [LARGE SCALE GENOMIC DNA]</scope>
    <source>
        <strain>Jake</strain>
    </source>
</reference>
<comment type="function">
    <text evidence="1">Catalyzes the transfer of the diacylglyceryl group from phosphatidylglycerol to the sulfhydryl group of the N-terminal cysteine of a prolipoprotein, the first step in the formation of mature lipoproteins.</text>
</comment>
<comment type="catalytic activity">
    <reaction evidence="1">
        <text>L-cysteinyl-[prolipoprotein] + a 1,2-diacyl-sn-glycero-3-phospho-(1'-sn-glycerol) = an S-1,2-diacyl-sn-glyceryl-L-cysteinyl-[prolipoprotein] + sn-glycerol 1-phosphate + H(+)</text>
        <dbReference type="Rhea" id="RHEA:56712"/>
        <dbReference type="Rhea" id="RHEA-COMP:14679"/>
        <dbReference type="Rhea" id="RHEA-COMP:14680"/>
        <dbReference type="ChEBI" id="CHEBI:15378"/>
        <dbReference type="ChEBI" id="CHEBI:29950"/>
        <dbReference type="ChEBI" id="CHEBI:57685"/>
        <dbReference type="ChEBI" id="CHEBI:64716"/>
        <dbReference type="ChEBI" id="CHEBI:140658"/>
        <dbReference type="EC" id="2.5.1.145"/>
    </reaction>
</comment>
<comment type="pathway">
    <text evidence="1">Protein modification; lipoprotein biosynthesis (diacylglyceryl transfer).</text>
</comment>
<comment type="subcellular location">
    <subcellularLocation>
        <location evidence="1">Cell inner membrane</location>
        <topology evidence="1">Multi-pass membrane protein</topology>
    </subcellularLocation>
</comment>
<comment type="similarity">
    <text evidence="1">Belongs to the Lgt family.</text>
</comment>
<name>LGT_EHRCJ</name>